<proteinExistence type="inferred from homology"/>
<reference key="1">
    <citation type="journal article" date="1999" name="Science">
        <title>Genome sequence of the radioresistant bacterium Deinococcus radiodurans R1.</title>
        <authorList>
            <person name="White O."/>
            <person name="Eisen J.A."/>
            <person name="Heidelberg J.F."/>
            <person name="Hickey E.K."/>
            <person name="Peterson J.D."/>
            <person name="Dodson R.J."/>
            <person name="Haft D.H."/>
            <person name="Gwinn M.L."/>
            <person name="Nelson W.C."/>
            <person name="Richardson D.L."/>
            <person name="Moffat K.S."/>
            <person name="Qin H."/>
            <person name="Jiang L."/>
            <person name="Pamphile W."/>
            <person name="Crosby M."/>
            <person name="Shen M."/>
            <person name="Vamathevan J.J."/>
            <person name="Lam P."/>
            <person name="McDonald L.A."/>
            <person name="Utterback T.R."/>
            <person name="Zalewski C."/>
            <person name="Makarova K.S."/>
            <person name="Aravind L."/>
            <person name="Daly M.J."/>
            <person name="Minton K.W."/>
            <person name="Fleischmann R.D."/>
            <person name="Ketchum K.A."/>
            <person name="Nelson K.E."/>
            <person name="Salzberg S.L."/>
            <person name="Smith H.O."/>
            <person name="Venter J.C."/>
            <person name="Fraser C.M."/>
        </authorList>
    </citation>
    <scope>NUCLEOTIDE SEQUENCE [LARGE SCALE GENOMIC DNA]</scope>
    <source>
        <strain>ATCC 13939 / DSM 20539 / JCM 16871 / CCUG 27074 / LMG 4051 / NBRC 15346 / NCIMB 9279 / VKM B-1422 / R1</strain>
    </source>
</reference>
<organism>
    <name type="scientific">Deinococcus radiodurans (strain ATCC 13939 / DSM 20539 / JCM 16871 / CCUG 27074 / LMG 4051 / NBRC 15346 / NCIMB 9279 / VKM B-1422 / R1)</name>
    <dbReference type="NCBI Taxonomy" id="243230"/>
    <lineage>
        <taxon>Bacteria</taxon>
        <taxon>Thermotogati</taxon>
        <taxon>Deinococcota</taxon>
        <taxon>Deinococci</taxon>
        <taxon>Deinococcales</taxon>
        <taxon>Deinococcaceae</taxon>
        <taxon>Deinococcus</taxon>
    </lineage>
</organism>
<protein>
    <recommendedName>
        <fullName evidence="1">Ferrochelatase</fullName>
        <ecNumber evidence="1">4.98.1.1</ecNumber>
    </recommendedName>
    <alternativeName>
        <fullName evidence="1">Heme synthase</fullName>
    </alternativeName>
    <alternativeName>
        <fullName evidence="1">Protoheme ferro-lyase</fullName>
    </alternativeName>
</protein>
<keyword id="KW-0963">Cytoplasm</keyword>
<keyword id="KW-0350">Heme biosynthesis</keyword>
<keyword id="KW-0408">Iron</keyword>
<keyword id="KW-0456">Lyase</keyword>
<keyword id="KW-0479">Metal-binding</keyword>
<keyword id="KW-0627">Porphyrin biosynthesis</keyword>
<keyword id="KW-1185">Reference proteome</keyword>
<name>HEMH_DEIRA</name>
<accession>Q9RV98</accession>
<gene>
    <name evidence="1" type="primary">hemH</name>
    <name type="ordered locus">DR_1131</name>
</gene>
<evidence type="ECO:0000255" key="1">
    <source>
        <dbReference type="HAMAP-Rule" id="MF_00323"/>
    </source>
</evidence>
<evidence type="ECO:0000305" key="2"/>
<feature type="chain" id="PRO_0000175136" description="Ferrochelatase">
    <location>
        <begin position="1"/>
        <end position="316"/>
    </location>
</feature>
<feature type="binding site" evidence="1">
    <location>
        <position position="186"/>
    </location>
    <ligand>
        <name>Fe cation</name>
        <dbReference type="ChEBI" id="CHEBI:24875"/>
    </ligand>
</feature>
<feature type="binding site" evidence="1">
    <location>
        <position position="268"/>
    </location>
    <ligand>
        <name>Fe cation</name>
        <dbReference type="ChEBI" id="CHEBI:24875"/>
    </ligand>
</feature>
<comment type="function">
    <text evidence="1">Catalyzes the ferrous insertion into protoporphyrin IX.</text>
</comment>
<comment type="catalytic activity">
    <reaction evidence="1">
        <text>heme b + 2 H(+) = protoporphyrin IX + Fe(2+)</text>
        <dbReference type="Rhea" id="RHEA:22584"/>
        <dbReference type="ChEBI" id="CHEBI:15378"/>
        <dbReference type="ChEBI" id="CHEBI:29033"/>
        <dbReference type="ChEBI" id="CHEBI:57306"/>
        <dbReference type="ChEBI" id="CHEBI:60344"/>
        <dbReference type="EC" id="4.98.1.1"/>
    </reaction>
</comment>
<comment type="pathway">
    <text evidence="1">Porphyrin-containing compound metabolism; protoheme biosynthesis; protoheme from protoporphyrin-IX: step 1/1.</text>
</comment>
<comment type="subcellular location">
    <subcellularLocation>
        <location evidence="1">Cytoplasm</location>
    </subcellularLocation>
</comment>
<comment type="similarity">
    <text evidence="1 2">Belongs to the ferrochelatase family.</text>
</comment>
<sequence>MTTLTNQKPLGVLFMAYGGPENLGEMPGYLADIRAGRVTSQAILDEITNNYRLIGGKSPLPEFTRAQVEATMEQLASTGRPLKAYIGMRHWSPWIEDAVREMLDDGIEQAIAIVLAPQYSSLSVAKYQKKIKAALEMNHGHIDFAYIDNYHTEPGYITALADRVRIGIQEFPEDERDDVHVILSAHSLPVRIIKEGDPYADQLHETARLVAAQAGLTDEQWSWSYQSAGRSPEPWLGPQLDEHLRDLNEQGIKKVVSIAIGFVSDHVEILFDIDIAAQEVAHELGMTLVRPPALNTDPLFIGTLASVIERKAAEVA</sequence>
<dbReference type="EC" id="4.98.1.1" evidence="1"/>
<dbReference type="EMBL" id="AE000513">
    <property type="protein sequence ID" value="AAF10700.1"/>
    <property type="molecule type" value="Genomic_DNA"/>
</dbReference>
<dbReference type="PIR" id="B75435">
    <property type="entry name" value="B75435"/>
</dbReference>
<dbReference type="RefSeq" id="NP_294855.1">
    <property type="nucleotide sequence ID" value="NC_001263.1"/>
</dbReference>
<dbReference type="RefSeq" id="WP_010887774.1">
    <property type="nucleotide sequence ID" value="NC_001263.1"/>
</dbReference>
<dbReference type="SMR" id="Q9RV98"/>
<dbReference type="FunCoup" id="Q9RV98">
    <property type="interactions" value="426"/>
</dbReference>
<dbReference type="STRING" id="243230.DR_1131"/>
<dbReference type="PaxDb" id="243230-DR_1131"/>
<dbReference type="EnsemblBacteria" id="AAF10700">
    <property type="protein sequence ID" value="AAF10700"/>
    <property type="gene ID" value="DR_1131"/>
</dbReference>
<dbReference type="GeneID" id="69517378"/>
<dbReference type="KEGG" id="dra:DR_1131"/>
<dbReference type="PATRIC" id="fig|243230.17.peg.1327"/>
<dbReference type="eggNOG" id="COG0276">
    <property type="taxonomic scope" value="Bacteria"/>
</dbReference>
<dbReference type="HOGENOM" id="CLU_018884_2_1_0"/>
<dbReference type="InParanoid" id="Q9RV98"/>
<dbReference type="OrthoDB" id="9776380at2"/>
<dbReference type="UniPathway" id="UPA00252">
    <property type="reaction ID" value="UER00325"/>
</dbReference>
<dbReference type="Proteomes" id="UP000002524">
    <property type="component" value="Chromosome 1"/>
</dbReference>
<dbReference type="GO" id="GO:0005737">
    <property type="term" value="C:cytoplasm"/>
    <property type="evidence" value="ECO:0007669"/>
    <property type="project" value="UniProtKB-SubCell"/>
</dbReference>
<dbReference type="GO" id="GO:0004325">
    <property type="term" value="F:ferrochelatase activity"/>
    <property type="evidence" value="ECO:0000318"/>
    <property type="project" value="GO_Central"/>
</dbReference>
<dbReference type="GO" id="GO:0046872">
    <property type="term" value="F:metal ion binding"/>
    <property type="evidence" value="ECO:0007669"/>
    <property type="project" value="UniProtKB-KW"/>
</dbReference>
<dbReference type="GO" id="GO:0006783">
    <property type="term" value="P:heme biosynthetic process"/>
    <property type="evidence" value="ECO:0000318"/>
    <property type="project" value="GO_Central"/>
</dbReference>
<dbReference type="CDD" id="cd00419">
    <property type="entry name" value="Ferrochelatase_C"/>
    <property type="match status" value="1"/>
</dbReference>
<dbReference type="CDD" id="cd03411">
    <property type="entry name" value="Ferrochelatase_N"/>
    <property type="match status" value="1"/>
</dbReference>
<dbReference type="FunFam" id="3.40.50.1400:FF:000007">
    <property type="entry name" value="Ferrochelatase"/>
    <property type="match status" value="1"/>
</dbReference>
<dbReference type="Gene3D" id="3.40.50.1400">
    <property type="match status" value="2"/>
</dbReference>
<dbReference type="HAMAP" id="MF_00323">
    <property type="entry name" value="Ferrochelatase"/>
    <property type="match status" value="1"/>
</dbReference>
<dbReference type="InterPro" id="IPR001015">
    <property type="entry name" value="Ferrochelatase"/>
</dbReference>
<dbReference type="InterPro" id="IPR019772">
    <property type="entry name" value="Ferrochelatase_AS"/>
</dbReference>
<dbReference type="InterPro" id="IPR033644">
    <property type="entry name" value="Ferrochelatase_C"/>
</dbReference>
<dbReference type="InterPro" id="IPR033659">
    <property type="entry name" value="Ferrochelatase_N"/>
</dbReference>
<dbReference type="NCBIfam" id="TIGR00109">
    <property type="entry name" value="hemH"/>
    <property type="match status" value="1"/>
</dbReference>
<dbReference type="PANTHER" id="PTHR11108">
    <property type="entry name" value="FERROCHELATASE"/>
    <property type="match status" value="1"/>
</dbReference>
<dbReference type="PANTHER" id="PTHR11108:SF1">
    <property type="entry name" value="FERROCHELATASE, MITOCHONDRIAL"/>
    <property type="match status" value="1"/>
</dbReference>
<dbReference type="Pfam" id="PF00762">
    <property type="entry name" value="Ferrochelatase"/>
    <property type="match status" value="1"/>
</dbReference>
<dbReference type="SUPFAM" id="SSF53800">
    <property type="entry name" value="Chelatase"/>
    <property type="match status" value="1"/>
</dbReference>
<dbReference type="PROSITE" id="PS00534">
    <property type="entry name" value="FERROCHELATASE"/>
    <property type="match status" value="1"/>
</dbReference>